<sequence>MKKQRKNKINRARNLAMFLVFGGMLVMYGGLLLKQFEIIMVILMLVGFVMVLASTALYFLIGLTSTKAAVVTCPNCGKETKVLGRVDLCMHCDEPLTMDRNLEGKEFDEKYNKHSKRAPR</sequence>
<proteinExistence type="inferred from homology"/>
<evidence type="ECO:0000255" key="1">
    <source>
        <dbReference type="HAMAP-Rule" id="MF_01502"/>
    </source>
</evidence>
<name>Y660_EXIS2</name>
<reference key="1">
    <citation type="submission" date="2008-04" db="EMBL/GenBank/DDBJ databases">
        <title>Complete sequence of chromosome of Exiguobacterium sibiricum 255-15.</title>
        <authorList>
            <consortium name="US DOE Joint Genome Institute"/>
            <person name="Copeland A."/>
            <person name="Lucas S."/>
            <person name="Lapidus A."/>
            <person name="Glavina del Rio T."/>
            <person name="Dalin E."/>
            <person name="Tice H."/>
            <person name="Bruce D."/>
            <person name="Goodwin L."/>
            <person name="Pitluck S."/>
            <person name="Kiss H."/>
            <person name="Chertkov O."/>
            <person name="Monk C."/>
            <person name="Brettin T."/>
            <person name="Detter J.C."/>
            <person name="Han C."/>
            <person name="Kuske C.R."/>
            <person name="Schmutz J."/>
            <person name="Larimer F."/>
            <person name="Land M."/>
            <person name="Hauser L."/>
            <person name="Kyrpides N."/>
            <person name="Mikhailova N."/>
            <person name="Vishnivetskaya T."/>
            <person name="Rodrigues D.F."/>
            <person name="Gilichinsky D."/>
            <person name="Tiedje J."/>
            <person name="Richardson P."/>
        </authorList>
    </citation>
    <scope>NUCLEOTIDE SEQUENCE [LARGE SCALE GENOMIC DNA]</scope>
    <source>
        <strain>DSM 17290 / CCUG 55495 / CIP 109462 / JCM 13490 / 255-15</strain>
    </source>
</reference>
<dbReference type="EMBL" id="CP001022">
    <property type="protein sequence ID" value="ACB60141.1"/>
    <property type="molecule type" value="Genomic_DNA"/>
</dbReference>
<dbReference type="RefSeq" id="WP_012369565.1">
    <property type="nucleotide sequence ID" value="NC_010556.1"/>
</dbReference>
<dbReference type="STRING" id="262543.Exig_0660"/>
<dbReference type="KEGG" id="esi:Exig_0660"/>
<dbReference type="eggNOG" id="ENOG50313Y4">
    <property type="taxonomic scope" value="Bacteria"/>
</dbReference>
<dbReference type="HOGENOM" id="CLU_143991_0_0_9"/>
<dbReference type="OrthoDB" id="1653848at2"/>
<dbReference type="Proteomes" id="UP000001681">
    <property type="component" value="Chromosome"/>
</dbReference>
<dbReference type="GO" id="GO:0005886">
    <property type="term" value="C:plasma membrane"/>
    <property type="evidence" value="ECO:0007669"/>
    <property type="project" value="UniProtKB-SubCell"/>
</dbReference>
<dbReference type="HAMAP" id="MF_01502">
    <property type="entry name" value="UPF0295"/>
    <property type="match status" value="1"/>
</dbReference>
<dbReference type="InterPro" id="IPR020912">
    <property type="entry name" value="UPF0295"/>
</dbReference>
<dbReference type="NCBIfam" id="NF002796">
    <property type="entry name" value="PRK02935.1"/>
    <property type="match status" value="1"/>
</dbReference>
<dbReference type="Pfam" id="PF11023">
    <property type="entry name" value="DUF2614"/>
    <property type="match status" value="1"/>
</dbReference>
<protein>
    <recommendedName>
        <fullName evidence="1">UPF0295 protein Exig_0660</fullName>
    </recommendedName>
</protein>
<organism>
    <name type="scientific">Exiguobacterium sibiricum (strain DSM 17290 / CCUG 55495 / CIP 109462 / JCM 13490 / 255-15)</name>
    <dbReference type="NCBI Taxonomy" id="262543"/>
    <lineage>
        <taxon>Bacteria</taxon>
        <taxon>Bacillati</taxon>
        <taxon>Bacillota</taxon>
        <taxon>Bacilli</taxon>
        <taxon>Bacillales</taxon>
        <taxon>Bacillales Family XII. Incertae Sedis</taxon>
        <taxon>Exiguobacterium</taxon>
    </lineage>
</organism>
<comment type="subcellular location">
    <subcellularLocation>
        <location evidence="1">Cell membrane</location>
        <topology evidence="1">Multi-pass membrane protein</topology>
    </subcellularLocation>
</comment>
<comment type="similarity">
    <text evidence="1">Belongs to the UPF0295 family.</text>
</comment>
<accession>B1YK60</accession>
<feature type="chain" id="PRO_0000346312" description="UPF0295 protein Exig_0660">
    <location>
        <begin position="1"/>
        <end position="120"/>
    </location>
</feature>
<feature type="transmembrane region" description="Helical" evidence="1">
    <location>
        <begin position="16"/>
        <end position="36"/>
    </location>
</feature>
<feature type="transmembrane region" description="Helical" evidence="1">
    <location>
        <begin position="41"/>
        <end position="61"/>
    </location>
</feature>
<gene>
    <name type="ordered locus">Exig_0660</name>
</gene>
<keyword id="KW-1003">Cell membrane</keyword>
<keyword id="KW-0472">Membrane</keyword>
<keyword id="KW-1185">Reference proteome</keyword>
<keyword id="KW-0812">Transmembrane</keyword>
<keyword id="KW-1133">Transmembrane helix</keyword>